<protein>
    <recommendedName>
        <fullName evidence="1">6,7-dimethyl-8-ribityllumazine synthase</fullName>
        <shortName evidence="1">DMRL synthase</shortName>
        <shortName evidence="1">LS</shortName>
        <shortName evidence="1">Lumazine synthase</shortName>
        <ecNumber evidence="1">2.5.1.78</ecNumber>
    </recommendedName>
</protein>
<dbReference type="EC" id="2.5.1.78" evidence="1"/>
<dbReference type="EMBL" id="AE006641">
    <property type="protein sequence ID" value="AAK40729.1"/>
    <property type="molecule type" value="Genomic_DNA"/>
</dbReference>
<dbReference type="PIR" id="B90184">
    <property type="entry name" value="B90184"/>
</dbReference>
<dbReference type="RefSeq" id="WP_009988789.1">
    <property type="nucleotide sequence ID" value="NC_002754.1"/>
</dbReference>
<dbReference type="SMR" id="Q980B5"/>
<dbReference type="FunCoup" id="Q980B5">
    <property type="interactions" value="155"/>
</dbReference>
<dbReference type="STRING" id="273057.SSO0400"/>
<dbReference type="PaxDb" id="273057-SSO0400"/>
<dbReference type="EnsemblBacteria" id="AAK40729">
    <property type="protein sequence ID" value="AAK40729"/>
    <property type="gene ID" value="SSO0400"/>
</dbReference>
<dbReference type="GeneID" id="44129381"/>
<dbReference type="KEGG" id="sso:SSO0400"/>
<dbReference type="PATRIC" id="fig|273057.12.peg.396"/>
<dbReference type="eggNOG" id="arCOG01323">
    <property type="taxonomic scope" value="Archaea"/>
</dbReference>
<dbReference type="HOGENOM" id="CLU_089358_3_1_2"/>
<dbReference type="InParanoid" id="Q980B5"/>
<dbReference type="PhylomeDB" id="Q980B5"/>
<dbReference type="UniPathway" id="UPA00275">
    <property type="reaction ID" value="UER00404"/>
</dbReference>
<dbReference type="Proteomes" id="UP000001974">
    <property type="component" value="Chromosome"/>
</dbReference>
<dbReference type="GO" id="GO:0005737">
    <property type="term" value="C:cytoplasm"/>
    <property type="evidence" value="ECO:0000318"/>
    <property type="project" value="GO_Central"/>
</dbReference>
<dbReference type="GO" id="GO:0009349">
    <property type="term" value="C:riboflavin synthase complex"/>
    <property type="evidence" value="ECO:0007669"/>
    <property type="project" value="InterPro"/>
</dbReference>
<dbReference type="GO" id="GO:0000906">
    <property type="term" value="F:6,7-dimethyl-8-ribityllumazine synthase activity"/>
    <property type="evidence" value="ECO:0000318"/>
    <property type="project" value="GO_Central"/>
</dbReference>
<dbReference type="GO" id="GO:0009231">
    <property type="term" value="P:riboflavin biosynthetic process"/>
    <property type="evidence" value="ECO:0000318"/>
    <property type="project" value="GO_Central"/>
</dbReference>
<dbReference type="CDD" id="cd09211">
    <property type="entry name" value="Lumazine_synthase_archaeal"/>
    <property type="match status" value="1"/>
</dbReference>
<dbReference type="FunFam" id="3.40.50.960:FF:000003">
    <property type="entry name" value="6,7-dimethyl-8-ribityllumazine synthase"/>
    <property type="match status" value="1"/>
</dbReference>
<dbReference type="Gene3D" id="3.40.50.960">
    <property type="entry name" value="Lumazine/riboflavin synthase"/>
    <property type="match status" value="1"/>
</dbReference>
<dbReference type="HAMAP" id="MF_00178">
    <property type="entry name" value="Lumazine_synth"/>
    <property type="match status" value="1"/>
</dbReference>
<dbReference type="InterPro" id="IPR034964">
    <property type="entry name" value="LS"/>
</dbReference>
<dbReference type="InterPro" id="IPR002180">
    <property type="entry name" value="LS/RS"/>
</dbReference>
<dbReference type="InterPro" id="IPR036467">
    <property type="entry name" value="LS/RS_sf"/>
</dbReference>
<dbReference type="NCBIfam" id="TIGR00114">
    <property type="entry name" value="lumazine-synth"/>
    <property type="match status" value="1"/>
</dbReference>
<dbReference type="PANTHER" id="PTHR21058:SF0">
    <property type="entry name" value="6,7-DIMETHYL-8-RIBITYLLUMAZINE SYNTHASE"/>
    <property type="match status" value="1"/>
</dbReference>
<dbReference type="PANTHER" id="PTHR21058">
    <property type="entry name" value="6,7-DIMETHYL-8-RIBITYLLUMAZINE SYNTHASE DMRL SYNTHASE LUMAZINE SYNTHASE"/>
    <property type="match status" value="1"/>
</dbReference>
<dbReference type="Pfam" id="PF00885">
    <property type="entry name" value="DMRL_synthase"/>
    <property type="match status" value="1"/>
</dbReference>
<dbReference type="SUPFAM" id="SSF52121">
    <property type="entry name" value="Lumazine synthase"/>
    <property type="match status" value="1"/>
</dbReference>
<feature type="chain" id="PRO_0000134853" description="6,7-dimethyl-8-ribityllumazine synthase">
    <location>
        <begin position="1"/>
        <end position="154"/>
    </location>
</feature>
<feature type="active site" description="Proton donor" evidence="1">
    <location>
        <position position="79"/>
    </location>
</feature>
<feature type="binding site" evidence="1">
    <location>
        <position position="15"/>
    </location>
    <ligand>
        <name>5-amino-6-(D-ribitylamino)uracil</name>
        <dbReference type="ChEBI" id="CHEBI:15934"/>
    </ligand>
</feature>
<feature type="binding site" evidence="1">
    <location>
        <begin position="47"/>
        <end position="49"/>
    </location>
    <ligand>
        <name>5-amino-6-(D-ribitylamino)uracil</name>
        <dbReference type="ChEBI" id="CHEBI:15934"/>
    </ligand>
</feature>
<feature type="binding site" evidence="1">
    <location>
        <begin position="71"/>
        <end position="73"/>
    </location>
    <ligand>
        <name>5-amino-6-(D-ribitylamino)uracil</name>
        <dbReference type="ChEBI" id="CHEBI:15934"/>
    </ligand>
</feature>
<feature type="binding site" evidence="1">
    <location>
        <begin position="76"/>
        <end position="77"/>
    </location>
    <ligand>
        <name>(2S)-2-hydroxy-3-oxobutyl phosphate</name>
        <dbReference type="ChEBI" id="CHEBI:58830"/>
    </ligand>
</feature>
<feature type="binding site" evidence="1">
    <location>
        <position position="104"/>
    </location>
    <ligand>
        <name>5-amino-6-(D-ribitylamino)uracil</name>
        <dbReference type="ChEBI" id="CHEBI:15934"/>
    </ligand>
</feature>
<feature type="binding site" evidence="1">
    <location>
        <position position="119"/>
    </location>
    <ligand>
        <name>(2S)-2-hydroxy-3-oxobutyl phosphate</name>
        <dbReference type="ChEBI" id="CHEBI:58830"/>
    </ligand>
</feature>
<comment type="function">
    <text evidence="1">Catalyzes the formation of 6,7-dimethyl-8-ribityllumazine by condensation of 5-amino-6-(D-ribitylamino)uracil with 3,4-dihydroxy-2-butanone 4-phosphate. This is the penultimate step in the biosynthesis of riboflavin.</text>
</comment>
<comment type="catalytic activity">
    <reaction evidence="1">
        <text>(2S)-2-hydroxy-3-oxobutyl phosphate + 5-amino-6-(D-ribitylamino)uracil = 6,7-dimethyl-8-(1-D-ribityl)lumazine + phosphate + 2 H2O + H(+)</text>
        <dbReference type="Rhea" id="RHEA:26152"/>
        <dbReference type="ChEBI" id="CHEBI:15377"/>
        <dbReference type="ChEBI" id="CHEBI:15378"/>
        <dbReference type="ChEBI" id="CHEBI:15934"/>
        <dbReference type="ChEBI" id="CHEBI:43474"/>
        <dbReference type="ChEBI" id="CHEBI:58201"/>
        <dbReference type="ChEBI" id="CHEBI:58830"/>
        <dbReference type="EC" id="2.5.1.78"/>
    </reaction>
</comment>
<comment type="pathway">
    <text evidence="1">Cofactor biosynthesis; riboflavin biosynthesis; riboflavin from 2-hydroxy-3-oxobutyl phosphate and 5-amino-6-(D-ribitylamino)uracil: step 1/2.</text>
</comment>
<comment type="similarity">
    <text evidence="1">Belongs to the DMRL synthase family.</text>
</comment>
<sequence>MQEKSIRLGIVVAEFNYDITQLMLQKALSHARFLNVEVKVVIKVPGTFDMPLAIKKLLEKDFIDAVVTLGAVIKGETKHDELVASQTARKIVDLSTEFNKPVTLGIIGHGATHEQAVERIEEYATRAVEAAIKLVQRTRKLDELKEIKETVIIE</sequence>
<reference key="1">
    <citation type="journal article" date="2001" name="Proc. Natl. Acad. Sci. U.S.A.">
        <title>The complete genome of the crenarchaeon Sulfolobus solfataricus P2.</title>
        <authorList>
            <person name="She Q."/>
            <person name="Singh R.K."/>
            <person name="Confalonieri F."/>
            <person name="Zivanovic Y."/>
            <person name="Allard G."/>
            <person name="Awayez M.J."/>
            <person name="Chan-Weiher C.C.-Y."/>
            <person name="Clausen I.G."/>
            <person name="Curtis B.A."/>
            <person name="De Moors A."/>
            <person name="Erauso G."/>
            <person name="Fletcher C."/>
            <person name="Gordon P.M.K."/>
            <person name="Heikamp-de Jong I."/>
            <person name="Jeffries A.C."/>
            <person name="Kozera C.J."/>
            <person name="Medina N."/>
            <person name="Peng X."/>
            <person name="Thi-Ngoc H.P."/>
            <person name="Redder P."/>
            <person name="Schenk M.E."/>
            <person name="Theriault C."/>
            <person name="Tolstrup N."/>
            <person name="Charlebois R.L."/>
            <person name="Doolittle W.F."/>
            <person name="Duguet M."/>
            <person name="Gaasterland T."/>
            <person name="Garrett R.A."/>
            <person name="Ragan M.A."/>
            <person name="Sensen C.W."/>
            <person name="Van der Oost J."/>
        </authorList>
    </citation>
    <scope>NUCLEOTIDE SEQUENCE [LARGE SCALE GENOMIC DNA]</scope>
    <source>
        <strain>ATCC 35092 / DSM 1617 / JCM 11322 / P2</strain>
    </source>
</reference>
<organism>
    <name type="scientific">Saccharolobus solfataricus (strain ATCC 35092 / DSM 1617 / JCM 11322 / P2)</name>
    <name type="common">Sulfolobus solfataricus</name>
    <dbReference type="NCBI Taxonomy" id="273057"/>
    <lineage>
        <taxon>Archaea</taxon>
        <taxon>Thermoproteota</taxon>
        <taxon>Thermoprotei</taxon>
        <taxon>Sulfolobales</taxon>
        <taxon>Sulfolobaceae</taxon>
        <taxon>Saccharolobus</taxon>
    </lineage>
</organism>
<accession>Q980B5</accession>
<keyword id="KW-1185">Reference proteome</keyword>
<keyword id="KW-0686">Riboflavin biosynthesis</keyword>
<keyword id="KW-0808">Transferase</keyword>
<gene>
    <name evidence="1" type="primary">ribH</name>
    <name type="ordered locus">SSO0400</name>
</gene>
<evidence type="ECO:0000255" key="1">
    <source>
        <dbReference type="HAMAP-Rule" id="MF_00178"/>
    </source>
</evidence>
<proteinExistence type="inferred from homology"/>
<name>RISB_SACS2</name>